<keyword id="KW-0217">Developmental protein</keyword>
<keyword id="KW-0325">Glycoprotein</keyword>
<keyword id="KW-1185">Reference proteome</keyword>
<keyword id="KW-0964">Secreted</keyword>
<keyword id="KW-0732">Signal</keyword>
<evidence type="ECO:0000255" key="1">
    <source>
        <dbReference type="HAMAP-Rule" id="MF_03060"/>
    </source>
</evidence>
<evidence type="ECO:0000256" key="2">
    <source>
        <dbReference type="SAM" id="MobiDB-lite"/>
    </source>
</evidence>
<organism>
    <name type="scientific">Salmo salar</name>
    <name type="common">Atlantic salmon</name>
    <dbReference type="NCBI Taxonomy" id="8030"/>
    <lineage>
        <taxon>Eukaryota</taxon>
        <taxon>Metazoa</taxon>
        <taxon>Chordata</taxon>
        <taxon>Craniata</taxon>
        <taxon>Vertebrata</taxon>
        <taxon>Euteleostomi</taxon>
        <taxon>Actinopterygii</taxon>
        <taxon>Neopterygii</taxon>
        <taxon>Teleostei</taxon>
        <taxon>Protacanthopterygii</taxon>
        <taxon>Salmoniformes</taxon>
        <taxon>Salmonidae</taxon>
        <taxon>Salmoninae</taxon>
        <taxon>Salmo</taxon>
    </lineage>
</organism>
<feature type="signal peptide" evidence="1">
    <location>
        <begin position="1"/>
        <end position="22"/>
    </location>
</feature>
<feature type="chain" id="PRO_0000365950" description="Draxin-A">
    <location>
        <begin position="23"/>
        <end position="382"/>
    </location>
</feature>
<feature type="region of interest" description="Disordered" evidence="2">
    <location>
        <begin position="28"/>
        <end position="213"/>
    </location>
</feature>
<feature type="region of interest" description="Disordered" evidence="2">
    <location>
        <begin position="233"/>
        <end position="252"/>
    </location>
</feature>
<feature type="region of interest" description="Disordered" evidence="2">
    <location>
        <begin position="275"/>
        <end position="297"/>
    </location>
</feature>
<feature type="compositionally biased region" description="Low complexity" evidence="2">
    <location>
        <begin position="73"/>
        <end position="82"/>
    </location>
</feature>
<feature type="compositionally biased region" description="Basic residues" evidence="2">
    <location>
        <begin position="139"/>
        <end position="149"/>
    </location>
</feature>
<feature type="compositionally biased region" description="Low complexity" evidence="2">
    <location>
        <begin position="190"/>
        <end position="201"/>
    </location>
</feature>
<feature type="compositionally biased region" description="Basic residues" evidence="2">
    <location>
        <begin position="281"/>
        <end position="290"/>
    </location>
</feature>
<feature type="glycosylation site" description="N-linked (GlcNAc...) asparagine" evidence="1">
    <location>
        <position position="291"/>
    </location>
</feature>
<feature type="glycosylation site" description="N-linked (GlcNAc...) asparagine" evidence="1">
    <location>
        <position position="296"/>
    </location>
</feature>
<sequence>MMSSSWCLPLALLFSTLAVSHSAEPGSTHAKRRLAQPLPGSGNALQYPDQGFQSHGHGHGRERGGGHGGQGSRGAKASSGAGLLSRRPLHPAARPEDDGTGLEGLNPVRLEMGPVGREQEKGHGGFRNPSHARDNHPLGPRKGRGQGHGHHFDQRRHGGRRDKGRLTKGFLPEPELGSVLKNRDLSEEGSVSSAAAATSPSHRLTPPTEPPSPIYAVFGSGSYAVSTVMSEHLPTLPPASTKPQKSGRGKMQGEVMPTLDMTLFDWTDYEDMKPVDAWPSSRKKDKRRSKNLSSGNVTVDTDAIEPCDHHLDCLPGSCCDLRQHECKPHNRGLNNKCYDDCMCEEGFRCYAKFHRKRRVTRRRGRCVVPESANSDQGAFITV</sequence>
<gene>
    <name type="primary">draxin-A</name>
</gene>
<comment type="function">
    <text evidence="1">Chemorepulsive axon guidance protein required for the development of spinal cord and forebrain commissures. Acts as a chemorepulsive guidance protein for commissural axons during development. Able to inhibit or repel neurite outgrowth from dorsal spinal cord.</text>
</comment>
<comment type="subcellular location">
    <subcellularLocation>
        <location evidence="1">Secreted</location>
    </subcellularLocation>
</comment>
<comment type="similarity">
    <text evidence="1">Belongs to the draxin family.</text>
</comment>
<proteinExistence type="evidence at transcript level"/>
<dbReference type="EMBL" id="BT045085">
    <property type="protein sequence ID" value="ACI33347.1"/>
    <property type="molecule type" value="mRNA"/>
</dbReference>
<dbReference type="RefSeq" id="XP_013989064.1">
    <property type="nucleotide sequence ID" value="XM_014133589.1"/>
</dbReference>
<dbReference type="SMR" id="B5X216"/>
<dbReference type="STRING" id="8030.ENSSSAP00000085509"/>
<dbReference type="GlyCosmos" id="B5X216">
    <property type="glycosylation" value="2 sites, No reported glycans"/>
</dbReference>
<dbReference type="PaxDb" id="8030-ENSSSAP00000085509"/>
<dbReference type="Ensembl" id="ENSSSAT00020033006">
    <property type="protein sequence ID" value="ENSSSAP00020030579"/>
    <property type="gene ID" value="ENSSSAG00020011625"/>
</dbReference>
<dbReference type="Ensembl" id="ENSSSAT00070068341">
    <property type="protein sequence ID" value="ENSSSAP00070065487"/>
    <property type="gene ID" value="ENSSSAG00070042515"/>
</dbReference>
<dbReference type="KEGG" id="sasa:106565906"/>
<dbReference type="OrthoDB" id="546988at7898"/>
<dbReference type="Proteomes" id="UP000087266">
    <property type="component" value="Chromosome ssa12"/>
</dbReference>
<dbReference type="Bgee" id="ENSSSAG00000069005">
    <property type="expression patterns" value="Expressed in mesonephros and 14 other cell types or tissues"/>
</dbReference>
<dbReference type="GO" id="GO:0005576">
    <property type="term" value="C:extracellular region"/>
    <property type="evidence" value="ECO:0007669"/>
    <property type="project" value="UniProtKB-SubCell"/>
</dbReference>
<dbReference type="GO" id="GO:0007411">
    <property type="term" value="P:axon guidance"/>
    <property type="evidence" value="ECO:0007669"/>
    <property type="project" value="UniProtKB-UniRule"/>
</dbReference>
<dbReference type="GO" id="GO:0021528">
    <property type="term" value="P:commissural neuron differentiation in spinal cord"/>
    <property type="evidence" value="ECO:0007669"/>
    <property type="project" value="UniProtKB-UniRule"/>
</dbReference>
<dbReference type="GO" id="GO:0021516">
    <property type="term" value="P:dorsal spinal cord development"/>
    <property type="evidence" value="ECO:0007669"/>
    <property type="project" value="UniProtKB-UniRule"/>
</dbReference>
<dbReference type="GO" id="GO:0030900">
    <property type="term" value="P:forebrain development"/>
    <property type="evidence" value="ECO:0007669"/>
    <property type="project" value="UniProtKB-UniRule"/>
</dbReference>
<dbReference type="GO" id="GO:0016055">
    <property type="term" value="P:Wnt signaling pathway"/>
    <property type="evidence" value="ECO:0007669"/>
    <property type="project" value="InterPro"/>
</dbReference>
<dbReference type="HAMAP" id="MF_03060">
    <property type="entry name" value="Draxin"/>
    <property type="match status" value="1"/>
</dbReference>
<dbReference type="InterPro" id="IPR029094">
    <property type="entry name" value="Draxin"/>
</dbReference>
<dbReference type="PANTHER" id="PTHR28610">
    <property type="entry name" value="DRAXIN"/>
    <property type="match status" value="1"/>
</dbReference>
<dbReference type="PANTHER" id="PTHR28610:SF1">
    <property type="entry name" value="DRAXIN"/>
    <property type="match status" value="1"/>
</dbReference>
<dbReference type="Pfam" id="PF15550">
    <property type="entry name" value="Draxin"/>
    <property type="match status" value="1"/>
</dbReference>
<reference key="1">
    <citation type="journal article" date="2010" name="BMC Genomics">
        <title>Salmo salar and Esox lucius full-length cDNA sequences reveal changes in evolutionary pressures on a post-tetraploidization genome.</title>
        <authorList>
            <person name="Leong J.S."/>
            <person name="Jantzen S.G."/>
            <person name="von Schalburg K.R."/>
            <person name="Cooper G.A."/>
            <person name="Messmer A.M."/>
            <person name="Liao N.Y."/>
            <person name="Munro S."/>
            <person name="Moore R."/>
            <person name="Holt R.A."/>
            <person name="Jones S.J."/>
            <person name="Davidson W.S."/>
            <person name="Koop B.F."/>
        </authorList>
    </citation>
    <scope>NUCLEOTIDE SEQUENCE [LARGE SCALE MRNA]</scope>
    <source>
        <tissue>Brain</tissue>
    </source>
</reference>
<accession>B5X216</accession>
<protein>
    <recommendedName>
        <fullName evidence="1">Draxin-A</fullName>
    </recommendedName>
    <alternativeName>
        <fullName evidence="1">Dorsal inhibitory axon guidance protein A</fullName>
    </alternativeName>
    <alternativeName>
        <fullName evidence="1">Dorsal repulsive axon guidance protein A</fullName>
    </alternativeName>
</protein>
<name>DRXIA_SALSA</name>